<keyword id="KW-0240">DNA-directed RNA polymerase</keyword>
<keyword id="KW-0548">Nucleotidyltransferase</keyword>
<keyword id="KW-0804">Transcription</keyword>
<keyword id="KW-0808">Transferase</keyword>
<accession>C1CAF1</accession>
<name>RPOY_STRP7</name>
<organism>
    <name type="scientific">Streptococcus pneumoniae (strain 70585)</name>
    <dbReference type="NCBI Taxonomy" id="488221"/>
    <lineage>
        <taxon>Bacteria</taxon>
        <taxon>Bacillati</taxon>
        <taxon>Bacillota</taxon>
        <taxon>Bacilli</taxon>
        <taxon>Lactobacillales</taxon>
        <taxon>Streptococcaceae</taxon>
        <taxon>Streptococcus</taxon>
    </lineage>
</organism>
<protein>
    <recommendedName>
        <fullName evidence="1">DNA-directed RNA polymerase subunit epsilon</fullName>
        <shortName evidence="1">RNAP epsilon subunit</shortName>
        <ecNumber evidence="1">2.7.7.6</ecNumber>
    </recommendedName>
    <alternativeName>
        <fullName evidence="1">RNA polymerase epsilon subunit</fullName>
    </alternativeName>
    <alternativeName>
        <fullName evidence="1">Transcriptase subunit epsilon</fullName>
    </alternativeName>
</protein>
<reference key="1">
    <citation type="journal article" date="2010" name="Genome Biol.">
        <title>Structure and dynamics of the pan-genome of Streptococcus pneumoniae and closely related species.</title>
        <authorList>
            <person name="Donati C."/>
            <person name="Hiller N.L."/>
            <person name="Tettelin H."/>
            <person name="Muzzi A."/>
            <person name="Croucher N.J."/>
            <person name="Angiuoli S.V."/>
            <person name="Oggioni M."/>
            <person name="Dunning Hotopp J.C."/>
            <person name="Hu F.Z."/>
            <person name="Riley D.R."/>
            <person name="Covacci A."/>
            <person name="Mitchell T.J."/>
            <person name="Bentley S.D."/>
            <person name="Kilian M."/>
            <person name="Ehrlich G.D."/>
            <person name="Rappuoli R."/>
            <person name="Moxon E.R."/>
            <person name="Masignani V."/>
        </authorList>
    </citation>
    <scope>NUCLEOTIDE SEQUENCE [LARGE SCALE GENOMIC DNA]</scope>
    <source>
        <strain>70585</strain>
    </source>
</reference>
<evidence type="ECO:0000255" key="1">
    <source>
        <dbReference type="HAMAP-Rule" id="MF_01553"/>
    </source>
</evidence>
<feature type="chain" id="PRO_1000185337" description="DNA-directed RNA polymerase subunit epsilon">
    <location>
        <begin position="1"/>
        <end position="77"/>
    </location>
</feature>
<comment type="function">
    <text evidence="1">A non-essential component of RNA polymerase (RNAP).</text>
</comment>
<comment type="catalytic activity">
    <reaction evidence="1">
        <text>RNA(n) + a ribonucleoside 5'-triphosphate = RNA(n+1) + diphosphate</text>
        <dbReference type="Rhea" id="RHEA:21248"/>
        <dbReference type="Rhea" id="RHEA-COMP:14527"/>
        <dbReference type="Rhea" id="RHEA-COMP:17342"/>
        <dbReference type="ChEBI" id="CHEBI:33019"/>
        <dbReference type="ChEBI" id="CHEBI:61557"/>
        <dbReference type="ChEBI" id="CHEBI:140395"/>
        <dbReference type="EC" id="2.7.7.6"/>
    </reaction>
</comment>
<comment type="subunit">
    <text evidence="1">RNAP is composed of a core of 2 alpha, a beta and a beta' subunit. The core is associated with a delta subunit, and at least one of epsilon or omega. When a sigma factor is associated with the core the holoenzyme is formed, which can initiate transcription.</text>
</comment>
<comment type="similarity">
    <text evidence="1">Belongs to the RNA polymerase subunit epsilon family.</text>
</comment>
<proteinExistence type="inferred from homology"/>
<sequence>MIYKVFYQETKERSPRRETTRTLYLDIDASSELEGRITARQLVEENRPEYNIEYIELLSDKLLDYEKETGAFEITEF</sequence>
<dbReference type="EC" id="2.7.7.6" evidence="1"/>
<dbReference type="EMBL" id="CP000918">
    <property type="protein sequence ID" value="ACO16965.1"/>
    <property type="molecule type" value="Genomic_DNA"/>
</dbReference>
<dbReference type="RefSeq" id="WP_000639589.1">
    <property type="nucleotide sequence ID" value="NC_012468.1"/>
</dbReference>
<dbReference type="SMR" id="C1CAF1"/>
<dbReference type="KEGG" id="snm:SP70585_0202"/>
<dbReference type="HOGENOM" id="CLU_187518_0_0_9"/>
<dbReference type="Proteomes" id="UP000002211">
    <property type="component" value="Chromosome"/>
</dbReference>
<dbReference type="GO" id="GO:0000428">
    <property type="term" value="C:DNA-directed RNA polymerase complex"/>
    <property type="evidence" value="ECO:0007669"/>
    <property type="project" value="UniProtKB-KW"/>
</dbReference>
<dbReference type="GO" id="GO:0003677">
    <property type="term" value="F:DNA binding"/>
    <property type="evidence" value="ECO:0007669"/>
    <property type="project" value="UniProtKB-UniRule"/>
</dbReference>
<dbReference type="GO" id="GO:0003899">
    <property type="term" value="F:DNA-directed RNA polymerase activity"/>
    <property type="evidence" value="ECO:0007669"/>
    <property type="project" value="UniProtKB-UniRule"/>
</dbReference>
<dbReference type="GO" id="GO:0006351">
    <property type="term" value="P:DNA-templated transcription"/>
    <property type="evidence" value="ECO:0007669"/>
    <property type="project" value="UniProtKB-UniRule"/>
</dbReference>
<dbReference type="Gene3D" id="3.10.20.730">
    <property type="entry name" value="RNAP, epsilon subunit-like"/>
    <property type="match status" value="1"/>
</dbReference>
<dbReference type="HAMAP" id="MF_01553">
    <property type="entry name" value="RNApol_bact_RpoY"/>
    <property type="match status" value="1"/>
</dbReference>
<dbReference type="InterPro" id="IPR009907">
    <property type="entry name" value="RpoY"/>
</dbReference>
<dbReference type="NCBIfam" id="NF010188">
    <property type="entry name" value="PRK13667.1"/>
    <property type="match status" value="1"/>
</dbReference>
<dbReference type="Pfam" id="PF07288">
    <property type="entry name" value="RpoY"/>
    <property type="match status" value="1"/>
</dbReference>
<gene>
    <name evidence="1" type="primary">rpoY</name>
    <name type="ordered locus">SP70585_0202</name>
</gene>